<name>UGA4_YEAST</name>
<accession>P32837</accession>
<accession>D6VRE4</accession>
<gene>
    <name type="primary">UGA4</name>
    <name type="ordered locus">YDL210W</name>
    <name type="ORF">D1037</name>
</gene>
<evidence type="ECO:0000255" key="1"/>
<evidence type="ECO:0000269" key="2">
    <source>
    </source>
</evidence>
<evidence type="ECO:0000305" key="3"/>
<dbReference type="EMBL" id="X66472">
    <property type="protein sequence ID" value="CAA47101.1"/>
    <property type="molecule type" value="Genomic_DNA"/>
</dbReference>
<dbReference type="EMBL" id="X99000">
    <property type="protein sequence ID" value="CAA67481.1"/>
    <property type="molecule type" value="Genomic_DNA"/>
</dbReference>
<dbReference type="EMBL" id="Z74258">
    <property type="protein sequence ID" value="CAA98788.1"/>
    <property type="molecule type" value="Genomic_DNA"/>
</dbReference>
<dbReference type="EMBL" id="BK006938">
    <property type="protein sequence ID" value="DAA11654.1"/>
    <property type="molecule type" value="Genomic_DNA"/>
</dbReference>
<dbReference type="PIR" id="S30253">
    <property type="entry name" value="S30253"/>
</dbReference>
<dbReference type="RefSeq" id="NP_010071.1">
    <property type="nucleotide sequence ID" value="NM_001180270.1"/>
</dbReference>
<dbReference type="SMR" id="P32837"/>
<dbReference type="BioGRID" id="31836">
    <property type="interactions" value="81"/>
</dbReference>
<dbReference type="DIP" id="DIP-1857N"/>
<dbReference type="FunCoup" id="P32837">
    <property type="interactions" value="281"/>
</dbReference>
<dbReference type="IntAct" id="P32837">
    <property type="interactions" value="7"/>
</dbReference>
<dbReference type="MINT" id="P32837"/>
<dbReference type="STRING" id="4932.YDL210W"/>
<dbReference type="TCDB" id="2.A.3.4.3">
    <property type="family name" value="the amino acid-polyamine-organocation (apc) family"/>
</dbReference>
<dbReference type="iPTMnet" id="P32837"/>
<dbReference type="PaxDb" id="4932-YDL210W"/>
<dbReference type="PeptideAtlas" id="P32837"/>
<dbReference type="EnsemblFungi" id="YDL210W_mRNA">
    <property type="protein sequence ID" value="YDL210W"/>
    <property type="gene ID" value="YDL210W"/>
</dbReference>
<dbReference type="GeneID" id="851317"/>
<dbReference type="KEGG" id="sce:YDL210W"/>
<dbReference type="AGR" id="SGD:S000002369"/>
<dbReference type="SGD" id="S000002369">
    <property type="gene designation" value="UGA4"/>
</dbReference>
<dbReference type="VEuPathDB" id="FungiDB:YDL210W"/>
<dbReference type="eggNOG" id="KOG1289">
    <property type="taxonomic scope" value="Eukaryota"/>
</dbReference>
<dbReference type="HOGENOM" id="CLU_004495_0_3_1"/>
<dbReference type="InParanoid" id="P32837"/>
<dbReference type="OMA" id="RMIWGVV"/>
<dbReference type="OrthoDB" id="4476201at2759"/>
<dbReference type="BioCyc" id="YEAST:G3O-29592-MONOMER"/>
<dbReference type="BioGRID-ORCS" id="851317">
    <property type="hits" value="0 hits in 10 CRISPR screens"/>
</dbReference>
<dbReference type="PRO" id="PR:P32837"/>
<dbReference type="Proteomes" id="UP000002311">
    <property type="component" value="Chromosome IV"/>
</dbReference>
<dbReference type="RNAct" id="P32837">
    <property type="molecule type" value="protein"/>
</dbReference>
<dbReference type="GO" id="GO:0000329">
    <property type="term" value="C:fungal-type vacuole membrane"/>
    <property type="evidence" value="ECO:0000314"/>
    <property type="project" value="SGD"/>
</dbReference>
<dbReference type="GO" id="GO:0015185">
    <property type="term" value="F:gamma-aminobutyric acid transmembrane transporter activity"/>
    <property type="evidence" value="ECO:0000318"/>
    <property type="project" value="GO_Central"/>
</dbReference>
<dbReference type="GO" id="GO:0015495">
    <property type="term" value="F:gamma-aminobutyric acid:proton symporter activity"/>
    <property type="evidence" value="ECO:0000316"/>
    <property type="project" value="SGD"/>
</dbReference>
<dbReference type="GO" id="GO:0015489">
    <property type="term" value="F:putrescine transmembrane transporter activity"/>
    <property type="evidence" value="ECO:0000315"/>
    <property type="project" value="SGD"/>
</dbReference>
<dbReference type="GO" id="GO:0015812">
    <property type="term" value="P:gamma-aminobutyric acid transport"/>
    <property type="evidence" value="ECO:0000315"/>
    <property type="project" value="SGD"/>
</dbReference>
<dbReference type="GO" id="GO:0015847">
    <property type="term" value="P:putrescine transport"/>
    <property type="evidence" value="ECO:0000315"/>
    <property type="project" value="SGD"/>
</dbReference>
<dbReference type="GO" id="GO:0055085">
    <property type="term" value="P:transmembrane transport"/>
    <property type="evidence" value="ECO:0000316"/>
    <property type="project" value="SGD"/>
</dbReference>
<dbReference type="FunFam" id="1.20.1740.10:FF:000046">
    <property type="entry name" value="Amino-acid permease, putative"/>
    <property type="match status" value="1"/>
</dbReference>
<dbReference type="Gene3D" id="1.20.1740.10">
    <property type="entry name" value="Amino acid/polyamine transporter I"/>
    <property type="match status" value="1"/>
</dbReference>
<dbReference type="InterPro" id="IPR002293">
    <property type="entry name" value="AA/rel_permease1"/>
</dbReference>
<dbReference type="InterPro" id="IPR004840">
    <property type="entry name" value="Amino_acid_permease_CS"/>
</dbReference>
<dbReference type="PANTHER" id="PTHR45649">
    <property type="entry name" value="AMINO-ACID PERMEASE BAT1"/>
    <property type="match status" value="1"/>
</dbReference>
<dbReference type="PANTHER" id="PTHR45649:SF6">
    <property type="entry name" value="GABA-SPECIFIC PERMEASE"/>
    <property type="match status" value="1"/>
</dbReference>
<dbReference type="Pfam" id="PF13520">
    <property type="entry name" value="AA_permease_2"/>
    <property type="match status" value="1"/>
</dbReference>
<dbReference type="PIRSF" id="PIRSF006060">
    <property type="entry name" value="AA_transporter"/>
    <property type="match status" value="1"/>
</dbReference>
<dbReference type="PROSITE" id="PS00218">
    <property type="entry name" value="AMINO_ACID_PERMEASE_1"/>
    <property type="match status" value="1"/>
</dbReference>
<keyword id="KW-0472">Membrane</keyword>
<keyword id="KW-1185">Reference proteome</keyword>
<keyword id="KW-0812">Transmembrane</keyword>
<keyword id="KW-1133">Transmembrane helix</keyword>
<keyword id="KW-0813">Transport</keyword>
<keyword id="KW-0926">Vacuole</keyword>
<proteinExistence type="evidence at protein level"/>
<sequence>MSMSSKNENKISVEQRISTDIGQAYQLQGLGSNLRSIRSKTGAGEVNYIDAAKSVNDNQLLAEIGYKQELKRQFSTLQVFGIAFSIMGLLPSIASVMGGGLGGGPATLVWGWFVAAFFILLVGITMAEHASSIPTAGGLYYWTYYYAPEGYKEIISFIIGCSNSLALAAGVCSIDYGLAEEIAAAVTLTKDGNFEVTSGKLYGIFAGAVVVMCICTCVASGAIARLQTLSIFANLFIIVLLFIALPIGTKHRMGGFNDGDFIFGKYENLSDWNNGWQFCLAGFMPAVWTIGSFDSCVHQSEEAKDAKKSVPIGIISSIAVCWILGWLIIICLMACINPDIDSVLDSKYGFALAQIIYDSLGKKWAIAFMSLIAFCQFLMGASITTAVSRQVWAFSRDNGLPLSKYIKRVDSKYSVPFFAILAACVGSLILGLLCLIDDAATDALFSLAVAGNNLAWSTPTVFRLTSGRDLFRPGPFYLGKIWSPIVAWTGVAFQLFIIILVMFPSQQHGITKSTMNYACVIGPGIWILAGIYYKVYKKKYYHGPATNLSDDDYTEAVGADVIDTIMSKQEP</sequence>
<protein>
    <recommendedName>
        <fullName>GABA-specific permease</fullName>
    </recommendedName>
    <alternativeName>
        <fullName>GABA-specific transport protein</fullName>
    </alternativeName>
</protein>
<reference key="1">
    <citation type="journal article" date="1993" name="Mol. Gen. Genet.">
        <title>Cloning and expression of the UGA4 gene coding for the inducible GABA-specific transport protein of Saccharomyces cerevisiae.</title>
        <authorList>
            <person name="Andre B."/>
            <person name="Hein C."/>
            <person name="Grenson M."/>
            <person name="Jauniaux J.-C."/>
        </authorList>
    </citation>
    <scope>NUCLEOTIDE SEQUENCE [GENOMIC DNA]</scope>
    <source>
        <strain>Sigma 1278B</strain>
    </source>
</reference>
<reference key="2">
    <citation type="journal article" date="1997" name="Nature">
        <title>The nucleotide sequence of Saccharomyces cerevisiae chromosome IV.</title>
        <authorList>
            <person name="Jacq C."/>
            <person name="Alt-Moerbe J."/>
            <person name="Andre B."/>
            <person name="Arnold W."/>
            <person name="Bahr A."/>
            <person name="Ballesta J.P.G."/>
            <person name="Bargues M."/>
            <person name="Baron L."/>
            <person name="Becker A."/>
            <person name="Biteau N."/>
            <person name="Bloecker H."/>
            <person name="Blugeon C."/>
            <person name="Boskovic J."/>
            <person name="Brandt P."/>
            <person name="Brueckner M."/>
            <person name="Buitrago M.J."/>
            <person name="Coster F."/>
            <person name="Delaveau T."/>
            <person name="del Rey F."/>
            <person name="Dujon B."/>
            <person name="Eide L.G."/>
            <person name="Garcia-Cantalejo J.M."/>
            <person name="Goffeau A."/>
            <person name="Gomez-Peris A."/>
            <person name="Granotier C."/>
            <person name="Hanemann V."/>
            <person name="Hankeln T."/>
            <person name="Hoheisel J.D."/>
            <person name="Jaeger W."/>
            <person name="Jimenez A."/>
            <person name="Jonniaux J.-L."/>
            <person name="Kraemer C."/>
            <person name="Kuester H."/>
            <person name="Laamanen P."/>
            <person name="Legros Y."/>
            <person name="Louis E.J."/>
            <person name="Moeller-Rieker S."/>
            <person name="Monnet A."/>
            <person name="Moro M."/>
            <person name="Mueller-Auer S."/>
            <person name="Nussbaumer B."/>
            <person name="Paricio N."/>
            <person name="Paulin L."/>
            <person name="Perea J."/>
            <person name="Perez-Alonso M."/>
            <person name="Perez-Ortin J.E."/>
            <person name="Pohl T.M."/>
            <person name="Prydz H."/>
            <person name="Purnelle B."/>
            <person name="Rasmussen S.W."/>
            <person name="Remacha M.A."/>
            <person name="Revuelta J.L."/>
            <person name="Rieger M."/>
            <person name="Salom D."/>
            <person name="Saluz H.P."/>
            <person name="Saiz J.E."/>
            <person name="Saren A.-M."/>
            <person name="Schaefer M."/>
            <person name="Scharfe M."/>
            <person name="Schmidt E.R."/>
            <person name="Schneider C."/>
            <person name="Scholler P."/>
            <person name="Schwarz S."/>
            <person name="Soler-Mira A."/>
            <person name="Urrestarazu L.A."/>
            <person name="Verhasselt P."/>
            <person name="Vissers S."/>
            <person name="Voet M."/>
            <person name="Volckaert G."/>
            <person name="Wagner G."/>
            <person name="Wambutt R."/>
            <person name="Wedler E."/>
            <person name="Wedler H."/>
            <person name="Woelfl S."/>
            <person name="Harris D.E."/>
            <person name="Bowman S."/>
            <person name="Brown D."/>
            <person name="Churcher C.M."/>
            <person name="Connor R."/>
            <person name="Dedman K."/>
            <person name="Gentles S."/>
            <person name="Hamlin N."/>
            <person name="Hunt S."/>
            <person name="Jones L."/>
            <person name="McDonald S."/>
            <person name="Murphy L.D."/>
            <person name="Niblett D."/>
            <person name="Odell C."/>
            <person name="Oliver K."/>
            <person name="Rajandream M.A."/>
            <person name="Richards C."/>
            <person name="Shore L."/>
            <person name="Walsh S.V."/>
            <person name="Barrell B.G."/>
            <person name="Dietrich F.S."/>
            <person name="Mulligan J.T."/>
            <person name="Allen E."/>
            <person name="Araujo R."/>
            <person name="Aviles E."/>
            <person name="Berno A."/>
            <person name="Carpenter J."/>
            <person name="Chen E."/>
            <person name="Cherry J.M."/>
            <person name="Chung E."/>
            <person name="Duncan M."/>
            <person name="Hunicke-Smith S."/>
            <person name="Hyman R.W."/>
            <person name="Komp C."/>
            <person name="Lashkari D."/>
            <person name="Lew H."/>
            <person name="Lin D."/>
            <person name="Mosedale D."/>
            <person name="Nakahara K."/>
            <person name="Namath A."/>
            <person name="Oefner P."/>
            <person name="Oh C."/>
            <person name="Petel F.X."/>
            <person name="Roberts D."/>
            <person name="Schramm S."/>
            <person name="Schroeder M."/>
            <person name="Shogren T."/>
            <person name="Shroff N."/>
            <person name="Winant A."/>
            <person name="Yelton M.A."/>
            <person name="Botstein D."/>
            <person name="Davis R.W."/>
            <person name="Johnston M."/>
            <person name="Andrews S."/>
            <person name="Brinkman R."/>
            <person name="Cooper J."/>
            <person name="Ding H."/>
            <person name="Du Z."/>
            <person name="Favello A."/>
            <person name="Fulton L."/>
            <person name="Gattung S."/>
            <person name="Greco T."/>
            <person name="Hallsworth K."/>
            <person name="Hawkins J."/>
            <person name="Hillier L.W."/>
            <person name="Jier M."/>
            <person name="Johnson D."/>
            <person name="Johnston L."/>
            <person name="Kirsten J."/>
            <person name="Kucaba T."/>
            <person name="Langston Y."/>
            <person name="Latreille P."/>
            <person name="Le T."/>
            <person name="Mardis E."/>
            <person name="Menezes S."/>
            <person name="Miller N."/>
            <person name="Nhan M."/>
            <person name="Pauley A."/>
            <person name="Peluso D."/>
            <person name="Rifkin L."/>
            <person name="Riles L."/>
            <person name="Taich A."/>
            <person name="Trevaskis E."/>
            <person name="Vignati D."/>
            <person name="Wilcox L."/>
            <person name="Wohldman P."/>
            <person name="Vaudin M."/>
            <person name="Wilson R."/>
            <person name="Waterston R."/>
            <person name="Albermann K."/>
            <person name="Hani J."/>
            <person name="Heumann K."/>
            <person name="Kleine K."/>
            <person name="Mewes H.-W."/>
            <person name="Zollner A."/>
            <person name="Zaccaria P."/>
        </authorList>
    </citation>
    <scope>NUCLEOTIDE SEQUENCE [LARGE SCALE GENOMIC DNA]</scope>
    <source>
        <strain>ATCC 204508 / S288c</strain>
    </source>
</reference>
<reference key="3">
    <citation type="journal article" date="2014" name="G3 (Bethesda)">
        <title>The reference genome sequence of Saccharomyces cerevisiae: Then and now.</title>
        <authorList>
            <person name="Engel S.R."/>
            <person name="Dietrich F.S."/>
            <person name="Fisk D.G."/>
            <person name="Binkley G."/>
            <person name="Balakrishnan R."/>
            <person name="Costanzo M.C."/>
            <person name="Dwight S.S."/>
            <person name="Hitz B.C."/>
            <person name="Karra K."/>
            <person name="Nash R.S."/>
            <person name="Weng S."/>
            <person name="Wong E.D."/>
            <person name="Lloyd P."/>
            <person name="Skrzypek M.S."/>
            <person name="Miyasato S.R."/>
            <person name="Simison M."/>
            <person name="Cherry J.M."/>
        </authorList>
    </citation>
    <scope>GENOME REANNOTATION</scope>
    <source>
        <strain>ATCC 204508 / S288c</strain>
    </source>
</reference>
<reference key="4">
    <citation type="journal article" date="2004" name="Biochem. Biophys. Res. Commun.">
        <title>Uptake of GABA and putrescine by UGA4 on the vacuolar membrane in Saccharomyces cerevisiae.</title>
        <authorList>
            <person name="Uemura T."/>
            <person name="Tomonari Y."/>
            <person name="Kashiwagi K."/>
            <person name="Igarashi K."/>
        </authorList>
    </citation>
    <scope>FUNCTION</scope>
    <scope>SUBCELLULAR LOCATION</scope>
</reference>
<reference key="5">
    <citation type="journal article" date="2006" name="Proc. Natl. Acad. Sci. U.S.A.">
        <title>A global topology map of the Saccharomyces cerevisiae membrane proteome.</title>
        <authorList>
            <person name="Kim H."/>
            <person name="Melen K."/>
            <person name="Oesterberg M."/>
            <person name="von Heijne G."/>
        </authorList>
    </citation>
    <scope>TOPOLOGY [LARGE SCALE ANALYSIS]</scope>
    <source>
        <strain>ATCC 208353 / W303-1A</strain>
    </source>
</reference>
<feature type="chain" id="PRO_0000054161" description="GABA-specific permease">
    <location>
        <begin position="1"/>
        <end position="571"/>
    </location>
</feature>
<feature type="topological domain" description="Cytoplasmic" evidence="1">
    <location>
        <begin position="1"/>
        <end position="73"/>
    </location>
</feature>
<feature type="transmembrane region" description="Helical" evidence="1">
    <location>
        <begin position="74"/>
        <end position="94"/>
    </location>
</feature>
<feature type="topological domain" description="Vacuolar" evidence="1">
    <location>
        <begin position="95"/>
        <end position="105"/>
    </location>
</feature>
<feature type="transmembrane region" description="Helical" evidence="1">
    <location>
        <begin position="106"/>
        <end position="126"/>
    </location>
</feature>
<feature type="topological domain" description="Cytoplasmic" evidence="1">
    <location>
        <begin position="127"/>
        <end position="153"/>
    </location>
</feature>
<feature type="transmembrane region" description="Helical" evidence="1">
    <location>
        <begin position="154"/>
        <end position="174"/>
    </location>
</feature>
<feature type="topological domain" description="Vacuolar" evidence="1">
    <location>
        <begin position="175"/>
        <end position="198"/>
    </location>
</feature>
<feature type="transmembrane region" description="Helical" evidence="1">
    <location>
        <begin position="199"/>
        <end position="219"/>
    </location>
</feature>
<feature type="topological domain" description="Cytoplasmic" evidence="1">
    <location>
        <begin position="220"/>
        <end position="228"/>
    </location>
</feature>
<feature type="transmembrane region" description="Helical" evidence="1">
    <location>
        <begin position="229"/>
        <end position="249"/>
    </location>
</feature>
<feature type="topological domain" description="Vacuolar" evidence="1">
    <location>
        <begin position="250"/>
        <end position="271"/>
    </location>
</feature>
<feature type="transmembrane region" description="Helical" evidence="1">
    <location>
        <begin position="272"/>
        <end position="292"/>
    </location>
</feature>
<feature type="topological domain" description="Cytoplasmic" evidence="1">
    <location>
        <begin position="293"/>
        <end position="312"/>
    </location>
</feature>
<feature type="transmembrane region" description="Helical" evidence="1">
    <location>
        <begin position="313"/>
        <end position="333"/>
    </location>
</feature>
<feature type="topological domain" description="Vacuolar" evidence="1">
    <location>
        <begin position="334"/>
        <end position="364"/>
    </location>
</feature>
<feature type="transmembrane region" description="Helical" evidence="1">
    <location>
        <begin position="365"/>
        <end position="385"/>
    </location>
</feature>
<feature type="topological domain" description="Cytoplasmic" evidence="1">
    <location>
        <begin position="386"/>
        <end position="416"/>
    </location>
</feature>
<feature type="transmembrane region" description="Helical" evidence="1">
    <location>
        <begin position="417"/>
        <end position="437"/>
    </location>
</feature>
<feature type="topological domain" description="Vacuolar" evidence="1">
    <location>
        <begin position="438"/>
        <end position="441"/>
    </location>
</feature>
<feature type="transmembrane region" description="Helical" evidence="1">
    <location>
        <begin position="442"/>
        <end position="462"/>
    </location>
</feature>
<feature type="topological domain" description="Cytoplasmic" evidence="1">
    <location>
        <begin position="463"/>
        <end position="482"/>
    </location>
</feature>
<feature type="transmembrane region" description="Helical" evidence="1">
    <location>
        <begin position="483"/>
        <end position="503"/>
    </location>
</feature>
<feature type="topological domain" description="Vacuolar" evidence="1">
    <location>
        <begin position="504"/>
        <end position="514"/>
    </location>
</feature>
<feature type="transmembrane region" description="Helical" evidence="1">
    <location>
        <begin position="515"/>
        <end position="535"/>
    </location>
</feature>
<feature type="topological domain" description="Cytoplasmic" evidence="1">
    <location>
        <begin position="536"/>
        <end position="571"/>
    </location>
</feature>
<organism>
    <name type="scientific">Saccharomyces cerevisiae (strain ATCC 204508 / S288c)</name>
    <name type="common">Baker's yeast</name>
    <dbReference type="NCBI Taxonomy" id="559292"/>
    <lineage>
        <taxon>Eukaryota</taxon>
        <taxon>Fungi</taxon>
        <taxon>Dikarya</taxon>
        <taxon>Ascomycota</taxon>
        <taxon>Saccharomycotina</taxon>
        <taxon>Saccharomycetes</taxon>
        <taxon>Saccharomycetales</taxon>
        <taxon>Saccharomycetaceae</taxon>
        <taxon>Saccharomyces</taxon>
    </lineage>
</organism>
<comment type="function">
    <text evidence="2">Required for high-affinity, high-specificity GABA transport. Also transports putrescine.</text>
</comment>
<comment type="subcellular location">
    <subcellularLocation>
        <location evidence="2">Vacuole membrane</location>
        <topology evidence="2">Multi-pass membrane protein</topology>
    </subcellularLocation>
</comment>
<comment type="induction">
    <text>In the presence of GABA.</text>
</comment>
<comment type="miscellaneous">
    <text>It requires NPR (nitrogen permease reactivator protein) for its full activity.</text>
</comment>
<comment type="similarity">
    <text evidence="3">Belongs to the amino acid-polyamine-organocation (APC) superfamily. Amino acid/choline transporter (ACT) (TC 2.A.3.4) family.</text>
</comment>